<protein>
    <recommendedName>
        <fullName>Uncharacterized protein RP269</fullName>
    </recommendedName>
</protein>
<feature type="chain" id="PRO_0000101344" description="Uncharacterized protein RP269">
    <location>
        <begin position="1"/>
        <end position="152"/>
    </location>
</feature>
<name>Y269_RICPR</name>
<reference key="1">
    <citation type="journal article" date="1998" name="Nature">
        <title>The genome sequence of Rickettsia prowazekii and the origin of mitochondria.</title>
        <authorList>
            <person name="Andersson S.G.E."/>
            <person name="Zomorodipour A."/>
            <person name="Andersson J.O."/>
            <person name="Sicheritz-Ponten T."/>
            <person name="Alsmark U.C.M."/>
            <person name="Podowski R.M."/>
            <person name="Naeslund A.K."/>
            <person name="Eriksson A.-S."/>
            <person name="Winkler H.H."/>
            <person name="Kurland C.G."/>
        </authorList>
    </citation>
    <scope>NUCLEOTIDE SEQUENCE [LARGE SCALE GENOMIC DNA]</scope>
    <source>
        <strain>Madrid E</strain>
    </source>
</reference>
<gene>
    <name type="ordered locus">RP269</name>
</gene>
<keyword id="KW-1185">Reference proteome</keyword>
<sequence>MWRALRRLIAANPMGFFLWSIITKWYLIIAVASLITLYYTVLGLKKIGFIDYFGRETEDILSQSKAVAQNCIPKLKLVNGKLPLNEFWDCLSDPGEYKHEEVTGARVLEDEINKFMQKQTDSIADTAHPIIHPYEKLENQNNLNNTLSDNNR</sequence>
<dbReference type="EMBL" id="AJ235271">
    <property type="protein sequence ID" value="CAA14731.1"/>
    <property type="molecule type" value="Genomic_DNA"/>
</dbReference>
<dbReference type="PIR" id="A71682">
    <property type="entry name" value="A71682"/>
</dbReference>
<dbReference type="RefSeq" id="NP_220654.1">
    <property type="nucleotide sequence ID" value="NC_000963.1"/>
</dbReference>
<dbReference type="RefSeq" id="WP_004599369.1">
    <property type="nucleotide sequence ID" value="NC_000963.1"/>
</dbReference>
<dbReference type="SMR" id="Q9ZDQ6"/>
<dbReference type="STRING" id="272947.gene:17555350"/>
<dbReference type="EnsemblBacteria" id="CAA14731">
    <property type="protein sequence ID" value="CAA14731"/>
    <property type="gene ID" value="CAA14731"/>
</dbReference>
<dbReference type="KEGG" id="rpr:RP269"/>
<dbReference type="PATRIC" id="fig|272947.5.peg.276"/>
<dbReference type="HOGENOM" id="CLU_1720958_0_0_5"/>
<dbReference type="OrthoDB" id="7160845at2"/>
<dbReference type="Proteomes" id="UP000002480">
    <property type="component" value="Chromosome"/>
</dbReference>
<dbReference type="InterPro" id="IPR022714">
    <property type="entry name" value="DUF2670"/>
</dbReference>
<dbReference type="Pfam" id="PF10875">
    <property type="entry name" value="DUF2670"/>
    <property type="match status" value="1"/>
</dbReference>
<organism>
    <name type="scientific">Rickettsia prowazekii (strain Madrid E)</name>
    <dbReference type="NCBI Taxonomy" id="272947"/>
    <lineage>
        <taxon>Bacteria</taxon>
        <taxon>Pseudomonadati</taxon>
        <taxon>Pseudomonadota</taxon>
        <taxon>Alphaproteobacteria</taxon>
        <taxon>Rickettsiales</taxon>
        <taxon>Rickettsiaceae</taxon>
        <taxon>Rickettsieae</taxon>
        <taxon>Rickettsia</taxon>
        <taxon>typhus group</taxon>
    </lineage>
</organism>
<accession>Q9ZDQ6</accession>
<proteinExistence type="predicted"/>